<feature type="chain" id="PRO_0000212357" description="Putative tyrosine-protein kinase AmsA">
    <location>
        <begin position="1"/>
        <end position="726"/>
    </location>
</feature>
<feature type="transmembrane region" description="Helical" evidence="2">
    <location>
        <begin position="32"/>
        <end position="52"/>
    </location>
</feature>
<feature type="transmembrane region" description="Helical" evidence="2">
    <location>
        <begin position="425"/>
        <end position="445"/>
    </location>
</feature>
<reference key="1">
    <citation type="journal article" date="1995" name="Mol. Microbiol.">
        <title>Molecular analysis of the ams operon required for exopolysaccharide synthesis of Erwinia amylovora.</title>
        <authorList>
            <person name="Bugert P."/>
            <person name="Geider K."/>
        </authorList>
    </citation>
    <scope>NUCLEOTIDE SEQUENCE [GENOMIC DNA]</scope>
    <source>
        <strain>EA1/79</strain>
    </source>
</reference>
<gene>
    <name type="primary">amsA</name>
</gene>
<dbReference type="EC" id="2.7.10.-"/>
<dbReference type="EMBL" id="X77921">
    <property type="protein sequence ID" value="CAA54882.1"/>
    <property type="molecule type" value="Genomic_DNA"/>
</dbReference>
<dbReference type="PIR" id="S61894">
    <property type="entry name" value="S52141"/>
</dbReference>
<dbReference type="RefSeq" id="WP_004158326.1">
    <property type="nucleotide sequence ID" value="NZ_RQKG01000006.1"/>
</dbReference>
<dbReference type="SMR" id="Q46631"/>
<dbReference type="OMA" id="TKDHPAY"/>
<dbReference type="UniPathway" id="UPA00631"/>
<dbReference type="PHI-base" id="PHI:2471"/>
<dbReference type="GO" id="GO:0005886">
    <property type="term" value="C:plasma membrane"/>
    <property type="evidence" value="ECO:0007669"/>
    <property type="project" value="UniProtKB-SubCell"/>
</dbReference>
<dbReference type="GO" id="GO:0005524">
    <property type="term" value="F:ATP binding"/>
    <property type="evidence" value="ECO:0007669"/>
    <property type="project" value="UniProtKB-KW"/>
</dbReference>
<dbReference type="GO" id="GO:0004713">
    <property type="term" value="F:protein tyrosine kinase activity"/>
    <property type="evidence" value="ECO:0007669"/>
    <property type="project" value="UniProtKB-KW"/>
</dbReference>
<dbReference type="GO" id="GO:0000271">
    <property type="term" value="P:polysaccharide biosynthetic process"/>
    <property type="evidence" value="ECO:0007669"/>
    <property type="project" value="UniProtKB-KW"/>
</dbReference>
<dbReference type="CDD" id="cd05387">
    <property type="entry name" value="BY-kinase"/>
    <property type="match status" value="1"/>
</dbReference>
<dbReference type="FunFam" id="3.40.50.300:FF:000527">
    <property type="entry name" value="Tyrosine-protein kinase etk"/>
    <property type="match status" value="1"/>
</dbReference>
<dbReference type="Gene3D" id="3.40.50.300">
    <property type="entry name" value="P-loop containing nucleotide triphosphate hydrolases"/>
    <property type="match status" value="1"/>
</dbReference>
<dbReference type="InterPro" id="IPR025669">
    <property type="entry name" value="AAA_dom"/>
</dbReference>
<dbReference type="InterPro" id="IPR050445">
    <property type="entry name" value="Bact_polysacc_biosynth/exp"/>
</dbReference>
<dbReference type="InterPro" id="IPR032807">
    <property type="entry name" value="GNVR"/>
</dbReference>
<dbReference type="InterPro" id="IPR003856">
    <property type="entry name" value="LPS_length_determ_N_term"/>
</dbReference>
<dbReference type="InterPro" id="IPR027417">
    <property type="entry name" value="P-loop_NTPase"/>
</dbReference>
<dbReference type="InterPro" id="IPR005702">
    <property type="entry name" value="Wzc-like_C"/>
</dbReference>
<dbReference type="NCBIfam" id="TIGR01007">
    <property type="entry name" value="eps_fam"/>
    <property type="match status" value="1"/>
</dbReference>
<dbReference type="PANTHER" id="PTHR32309">
    <property type="entry name" value="TYROSINE-PROTEIN KINASE"/>
    <property type="match status" value="1"/>
</dbReference>
<dbReference type="PANTHER" id="PTHR32309:SF32">
    <property type="entry name" value="TYROSINE-PROTEIN KINASE ETK-RELATED"/>
    <property type="match status" value="1"/>
</dbReference>
<dbReference type="Pfam" id="PF13614">
    <property type="entry name" value="AAA_31"/>
    <property type="match status" value="1"/>
</dbReference>
<dbReference type="Pfam" id="PF13807">
    <property type="entry name" value="GNVR"/>
    <property type="match status" value="1"/>
</dbReference>
<dbReference type="Pfam" id="PF23607">
    <property type="entry name" value="WZC_N"/>
    <property type="match status" value="1"/>
</dbReference>
<dbReference type="Pfam" id="PF02706">
    <property type="entry name" value="Wzz"/>
    <property type="match status" value="1"/>
</dbReference>
<dbReference type="SUPFAM" id="SSF52540">
    <property type="entry name" value="P-loop containing nucleoside triphosphate hydrolases"/>
    <property type="match status" value="1"/>
</dbReference>
<keyword id="KW-0067">ATP-binding</keyword>
<keyword id="KW-0997">Cell inner membrane</keyword>
<keyword id="KW-1003">Cell membrane</keyword>
<keyword id="KW-0270">Exopolysaccharide synthesis</keyword>
<keyword id="KW-0418">Kinase</keyword>
<keyword id="KW-0472">Membrane</keyword>
<keyword id="KW-0547">Nucleotide-binding</keyword>
<keyword id="KW-0808">Transferase</keyword>
<keyword id="KW-0812">Transmembrane</keyword>
<keyword id="KW-1133">Transmembrane helix</keyword>
<keyword id="KW-0829">Tyrosine-protein kinase</keyword>
<keyword id="KW-0843">Virulence</keyword>
<organism>
    <name type="scientific">Erwinia amylovora</name>
    <name type="common">Fire blight bacteria</name>
    <dbReference type="NCBI Taxonomy" id="552"/>
    <lineage>
        <taxon>Bacteria</taxon>
        <taxon>Pseudomonadati</taxon>
        <taxon>Pseudomonadota</taxon>
        <taxon>Gammaproteobacteria</taxon>
        <taxon>Enterobacterales</taxon>
        <taxon>Erwiniaceae</taxon>
        <taxon>Erwinia</taxon>
    </lineage>
</organism>
<comment type="function">
    <text>Involved in the biosynthesis of amylovoran which functions as a virulence factor.</text>
</comment>
<comment type="catalytic activity">
    <reaction>
        <text>L-tyrosyl-[protein] + ATP = O-phospho-L-tyrosyl-[protein] + ADP + H(+)</text>
        <dbReference type="Rhea" id="RHEA:10596"/>
        <dbReference type="Rhea" id="RHEA-COMP:10136"/>
        <dbReference type="Rhea" id="RHEA-COMP:20101"/>
        <dbReference type="ChEBI" id="CHEBI:15378"/>
        <dbReference type="ChEBI" id="CHEBI:30616"/>
        <dbReference type="ChEBI" id="CHEBI:46858"/>
        <dbReference type="ChEBI" id="CHEBI:61978"/>
        <dbReference type="ChEBI" id="CHEBI:456216"/>
    </reaction>
</comment>
<comment type="pathway">
    <text>Glycan metabolism; exopolysaccharide biosynthesis.</text>
</comment>
<comment type="subcellular location">
    <subcellularLocation>
        <location evidence="1">Cell inner membrane</location>
        <topology evidence="1">Multi-pass membrane protein</topology>
    </subcellularLocation>
</comment>
<comment type="similarity">
    <text evidence="3">Belongs to the etk/wzc family.</text>
</comment>
<accession>Q46631</accession>
<name>AMSA_ERWAM</name>
<sequence>MKSKIEEPSANGGEAIRFELAHLLGQLLDHRWMIVAVSVLFTLMGTLYSLFATPIYSADAMVQVEQKNANTVLNDISQMMPNAQPASAAEIEIITSRMVLGKTVADLGLDVLVQQDHFPLIGAGLSRIIGQKAQQIAVSRLKVPTLWDKRELSVEVDGPDSYTVSKDGNELFKGKVGQFEQHGDVTMLVNSIEADAGTRFTVSKLNNLQAIKMISNNLVVADMGKDTGVLGLTYSGEDPVQISRVLDQVINNYLYQNIARKSEEAEKSIQFLAQQLPDVRAKLDQAEDKLNVFRRKHDSVDMSLEAKSALDSSVSIQTQLNALTFREAEVSQLFKKDHPTYRALLEKRQTLDEQQKQLNGKISQMPQTQQEIVRLTRDVQAGQEIYMQLLNRQQELNISKASTVGDVRIIDHAETAAKPVAPKSILIVAGSLILGLVVSVGLVLMKALFHHGIDNPEQLEELGLNVYASVPLSEWQRKKDQETLLKRKLDARTDPHNRLLALGNPTDLSIEAIRSLRTSLHFAMMDAQNNILMITGASPGIGKTFVCANLATLVAKTGEKVLFIDGDMRRGYTHELLGAESKTGLSDILSGKLPFNTDLVQRGDYGFDFIARGQVPPNPSELLMNSRMKELVHWASQNYDLVLIDTPPILAVTDASIIGKLAGTSLMVARFETNTVKEVEISYKRFIQNGIDIKGIILNAVVRKSANNYGYGYDYYDYSYQQGEKS</sequence>
<protein>
    <recommendedName>
        <fullName>Putative tyrosine-protein kinase AmsA</fullName>
        <ecNumber>2.7.10.-</ecNumber>
    </recommendedName>
    <alternativeName>
        <fullName>Amylovoran biosynthesis membrane-associated protein AmsA</fullName>
    </alternativeName>
</protein>
<evidence type="ECO:0000250" key="1"/>
<evidence type="ECO:0000255" key="2"/>
<evidence type="ECO:0000305" key="3"/>
<proteinExistence type="inferred from homology"/>